<organism>
    <name type="scientific">Desulforapulum autotrophicum (strain ATCC 43914 / DSM 3382 / VKM B-1955 / HRM2)</name>
    <name type="common">Desulfobacterium autotrophicum</name>
    <dbReference type="NCBI Taxonomy" id="177437"/>
    <lineage>
        <taxon>Bacteria</taxon>
        <taxon>Pseudomonadati</taxon>
        <taxon>Thermodesulfobacteriota</taxon>
        <taxon>Desulfobacteria</taxon>
        <taxon>Desulfobacterales</taxon>
        <taxon>Desulfobacteraceae</taxon>
        <taxon>Desulforapulum</taxon>
    </lineage>
</organism>
<sequence length="95" mass="10357">MSLRPLQDRILVERVQETEKTKGGIIIPDTAKEKPAEGKVVASGNGRVGEDGKLIPMDLKVGDTILFSKYGGTEVKIDGTDYLIMRQDDVLGVIE</sequence>
<feature type="chain" id="PRO_1000212110" description="Co-chaperonin GroES">
    <location>
        <begin position="1"/>
        <end position="95"/>
    </location>
</feature>
<gene>
    <name evidence="1" type="primary">groES</name>
    <name evidence="1" type="synonym">groS</name>
    <name type="ordered locus">HRM2_30610</name>
</gene>
<evidence type="ECO:0000255" key="1">
    <source>
        <dbReference type="HAMAP-Rule" id="MF_00580"/>
    </source>
</evidence>
<accession>C0QKQ4</accession>
<keyword id="KW-0143">Chaperone</keyword>
<keyword id="KW-0963">Cytoplasm</keyword>
<keyword id="KW-1185">Reference proteome</keyword>
<name>CH10_DESAH</name>
<protein>
    <recommendedName>
        <fullName evidence="1">Co-chaperonin GroES</fullName>
    </recommendedName>
    <alternativeName>
        <fullName evidence="1">10 kDa chaperonin</fullName>
    </alternativeName>
    <alternativeName>
        <fullName evidence="1">Chaperonin-10</fullName>
        <shortName evidence="1">Cpn10</shortName>
    </alternativeName>
</protein>
<dbReference type="EMBL" id="CP001087">
    <property type="protein sequence ID" value="ACN16144.1"/>
    <property type="molecule type" value="Genomic_DNA"/>
</dbReference>
<dbReference type="RefSeq" id="WP_015904906.1">
    <property type="nucleotide sequence ID" value="NC_012108.1"/>
</dbReference>
<dbReference type="SMR" id="C0QKQ4"/>
<dbReference type="STRING" id="177437.HRM2_30610"/>
<dbReference type="KEGG" id="dat:HRM2_30610"/>
<dbReference type="eggNOG" id="COG0234">
    <property type="taxonomic scope" value="Bacteria"/>
</dbReference>
<dbReference type="HOGENOM" id="CLU_132825_2_0_7"/>
<dbReference type="OrthoDB" id="9806791at2"/>
<dbReference type="Proteomes" id="UP000000442">
    <property type="component" value="Chromosome"/>
</dbReference>
<dbReference type="GO" id="GO:0005737">
    <property type="term" value="C:cytoplasm"/>
    <property type="evidence" value="ECO:0007669"/>
    <property type="project" value="UniProtKB-SubCell"/>
</dbReference>
<dbReference type="GO" id="GO:0005524">
    <property type="term" value="F:ATP binding"/>
    <property type="evidence" value="ECO:0007669"/>
    <property type="project" value="InterPro"/>
</dbReference>
<dbReference type="GO" id="GO:0046872">
    <property type="term" value="F:metal ion binding"/>
    <property type="evidence" value="ECO:0007669"/>
    <property type="project" value="TreeGrafter"/>
</dbReference>
<dbReference type="GO" id="GO:0044183">
    <property type="term" value="F:protein folding chaperone"/>
    <property type="evidence" value="ECO:0007669"/>
    <property type="project" value="InterPro"/>
</dbReference>
<dbReference type="GO" id="GO:0051087">
    <property type="term" value="F:protein-folding chaperone binding"/>
    <property type="evidence" value="ECO:0007669"/>
    <property type="project" value="TreeGrafter"/>
</dbReference>
<dbReference type="GO" id="GO:0051082">
    <property type="term" value="F:unfolded protein binding"/>
    <property type="evidence" value="ECO:0007669"/>
    <property type="project" value="TreeGrafter"/>
</dbReference>
<dbReference type="GO" id="GO:0051085">
    <property type="term" value="P:chaperone cofactor-dependent protein refolding"/>
    <property type="evidence" value="ECO:0007669"/>
    <property type="project" value="TreeGrafter"/>
</dbReference>
<dbReference type="CDD" id="cd00320">
    <property type="entry name" value="cpn10"/>
    <property type="match status" value="1"/>
</dbReference>
<dbReference type="FunFam" id="2.30.33.40:FF:000001">
    <property type="entry name" value="10 kDa chaperonin"/>
    <property type="match status" value="1"/>
</dbReference>
<dbReference type="Gene3D" id="2.30.33.40">
    <property type="entry name" value="GroES chaperonin"/>
    <property type="match status" value="1"/>
</dbReference>
<dbReference type="HAMAP" id="MF_00580">
    <property type="entry name" value="CH10"/>
    <property type="match status" value="1"/>
</dbReference>
<dbReference type="InterPro" id="IPR020818">
    <property type="entry name" value="Chaperonin_GroES"/>
</dbReference>
<dbReference type="InterPro" id="IPR037124">
    <property type="entry name" value="Chaperonin_GroES_sf"/>
</dbReference>
<dbReference type="InterPro" id="IPR018369">
    <property type="entry name" value="Chaprnonin_Cpn10_CS"/>
</dbReference>
<dbReference type="InterPro" id="IPR011032">
    <property type="entry name" value="GroES-like_sf"/>
</dbReference>
<dbReference type="NCBIfam" id="NF001527">
    <property type="entry name" value="PRK00364.1-2"/>
    <property type="match status" value="1"/>
</dbReference>
<dbReference type="NCBIfam" id="NF001529">
    <property type="entry name" value="PRK00364.1-5"/>
    <property type="match status" value="1"/>
</dbReference>
<dbReference type="NCBIfam" id="NF001531">
    <property type="entry name" value="PRK00364.2-2"/>
    <property type="match status" value="1"/>
</dbReference>
<dbReference type="NCBIfam" id="NF001533">
    <property type="entry name" value="PRK00364.2-4"/>
    <property type="match status" value="1"/>
</dbReference>
<dbReference type="NCBIfam" id="NF001534">
    <property type="entry name" value="PRK00364.2-5"/>
    <property type="match status" value="1"/>
</dbReference>
<dbReference type="PANTHER" id="PTHR10772">
    <property type="entry name" value="10 KDA HEAT SHOCK PROTEIN"/>
    <property type="match status" value="1"/>
</dbReference>
<dbReference type="PANTHER" id="PTHR10772:SF63">
    <property type="entry name" value="20 KDA CHAPERONIN, CHLOROPLASTIC"/>
    <property type="match status" value="1"/>
</dbReference>
<dbReference type="Pfam" id="PF00166">
    <property type="entry name" value="Cpn10"/>
    <property type="match status" value="1"/>
</dbReference>
<dbReference type="PRINTS" id="PR00297">
    <property type="entry name" value="CHAPERONIN10"/>
</dbReference>
<dbReference type="SMART" id="SM00883">
    <property type="entry name" value="Cpn10"/>
    <property type="match status" value="1"/>
</dbReference>
<dbReference type="SUPFAM" id="SSF50129">
    <property type="entry name" value="GroES-like"/>
    <property type="match status" value="1"/>
</dbReference>
<dbReference type="PROSITE" id="PS00681">
    <property type="entry name" value="CHAPERONINS_CPN10"/>
    <property type="match status" value="1"/>
</dbReference>
<comment type="function">
    <text evidence="1">Together with the chaperonin GroEL, plays an essential role in assisting protein folding. The GroEL-GroES system forms a nano-cage that allows encapsulation of the non-native substrate proteins and provides a physical environment optimized to promote and accelerate protein folding. GroES binds to the apical surface of the GroEL ring, thereby capping the opening of the GroEL channel.</text>
</comment>
<comment type="subunit">
    <text evidence="1">Heptamer of 7 subunits arranged in a ring. Interacts with the chaperonin GroEL.</text>
</comment>
<comment type="subcellular location">
    <subcellularLocation>
        <location evidence="1">Cytoplasm</location>
    </subcellularLocation>
</comment>
<comment type="similarity">
    <text evidence="1">Belongs to the GroES chaperonin family.</text>
</comment>
<proteinExistence type="inferred from homology"/>
<reference key="1">
    <citation type="journal article" date="2009" name="Environ. Microbiol.">
        <title>Genome sequence of Desulfobacterium autotrophicum HRM2, a marine sulfate reducer oxidizing organic carbon completely to carbon dioxide.</title>
        <authorList>
            <person name="Strittmatter A.W."/>
            <person name="Liesegang H."/>
            <person name="Rabus R."/>
            <person name="Decker I."/>
            <person name="Amann J."/>
            <person name="Andres S."/>
            <person name="Henne A."/>
            <person name="Fricke W.F."/>
            <person name="Martinez-Arias R."/>
            <person name="Bartels D."/>
            <person name="Goesmann A."/>
            <person name="Krause L."/>
            <person name="Puehler A."/>
            <person name="Klenk H.P."/>
            <person name="Richter M."/>
            <person name="Schuler M."/>
            <person name="Gloeckner F.O."/>
            <person name="Meyerdierks A."/>
            <person name="Gottschalk G."/>
            <person name="Amann R."/>
        </authorList>
    </citation>
    <scope>NUCLEOTIDE SEQUENCE [LARGE SCALE GENOMIC DNA]</scope>
    <source>
        <strain>ATCC 43914 / DSM 3382 / VKM B-1955 / HRM2</strain>
    </source>
</reference>